<dbReference type="EMBL" id="GQ380440">
    <property type="protein sequence ID" value="ACX49752.1"/>
    <property type="molecule type" value="mRNA"/>
</dbReference>
<dbReference type="SMR" id="D2IT41"/>
<dbReference type="GO" id="GO:0005615">
    <property type="term" value="C:extracellular space"/>
    <property type="evidence" value="ECO:0000303"/>
    <property type="project" value="UniProtKB"/>
</dbReference>
<dbReference type="GO" id="GO:0045202">
    <property type="term" value="C:synapse"/>
    <property type="evidence" value="ECO:0007669"/>
    <property type="project" value="GOC"/>
</dbReference>
<dbReference type="GO" id="GO:0005179">
    <property type="term" value="F:hormone activity"/>
    <property type="evidence" value="ECO:0007669"/>
    <property type="project" value="UniProtKB-KW"/>
</dbReference>
<dbReference type="GO" id="GO:0007268">
    <property type="term" value="P:chemical synaptic transmission"/>
    <property type="evidence" value="ECO:0007669"/>
    <property type="project" value="UniProtKB-KW"/>
</dbReference>
<dbReference type="GO" id="GO:0007218">
    <property type="term" value="P:neuropeptide signaling pathway"/>
    <property type="evidence" value="ECO:0007669"/>
    <property type="project" value="UniProtKB-KW"/>
</dbReference>
<dbReference type="GO" id="GO:0051904">
    <property type="term" value="P:pigment granule transport"/>
    <property type="evidence" value="ECO:0000303"/>
    <property type="project" value="UniProtKB"/>
</dbReference>
<dbReference type="GO" id="GO:0009416">
    <property type="term" value="P:response to light stimulus"/>
    <property type="evidence" value="ECO:0007669"/>
    <property type="project" value="InterPro"/>
</dbReference>
<dbReference type="InterPro" id="IPR009396">
    <property type="entry name" value="Pigment_DH"/>
</dbReference>
<dbReference type="Pfam" id="PF06324">
    <property type="entry name" value="Pigment_DH"/>
    <property type="match status" value="1"/>
</dbReference>
<protein>
    <recommendedName>
        <fullName evidence="5">Pigment-dispersing hormone peptides</fullName>
    </recommendedName>
    <component>
        <recommendedName>
            <fullName evidence="5">PDH precursor-related peptide</fullName>
            <shortName evidence="5">PPRP</shortName>
        </recommendedName>
    </component>
    <component>
        <recommendedName>
            <fullName evidence="5">Pigment-dispersing hormone</fullName>
            <shortName evidence="5">PDH</shortName>
        </recommendedName>
    </component>
</protein>
<keyword id="KW-0027">Amidation</keyword>
<keyword id="KW-0165">Cleavage on pair of basic residues</keyword>
<keyword id="KW-0903">Direct protein sequencing</keyword>
<keyword id="KW-0372">Hormone</keyword>
<keyword id="KW-0527">Neuropeptide</keyword>
<keyword id="KW-0529">Neurotransmitter</keyword>
<keyword id="KW-0964">Secreted</keyword>
<keyword id="KW-0732">Signal</keyword>
<feature type="signal peptide" evidence="3">
    <location>
        <begin position="1"/>
        <end position="24"/>
    </location>
</feature>
<feature type="peptide" id="PRO_5000555737" description="PDH precursor-related peptide" evidence="3 5">
    <location>
        <begin position="25"/>
        <end position="60"/>
    </location>
</feature>
<feature type="peptide" id="PRO_5000555738" description="Pigment-dispersing hormone" evidence="4">
    <location>
        <begin position="63"/>
        <end position="80"/>
    </location>
</feature>
<feature type="modified residue" description="Alanine amide" evidence="1">
    <location>
        <position position="80"/>
    </location>
</feature>
<organism>
    <name type="scientific">Eurydice pulchra</name>
    <name type="common">Speckled sea louse</name>
    <dbReference type="NCBI Taxonomy" id="155694"/>
    <lineage>
        <taxon>Eukaryota</taxon>
        <taxon>Metazoa</taxon>
        <taxon>Ecdysozoa</taxon>
        <taxon>Arthropoda</taxon>
        <taxon>Crustacea</taxon>
        <taxon>Multicrustacea</taxon>
        <taxon>Malacostraca</taxon>
        <taxon>Eumalacostraca</taxon>
        <taxon>Peracarida</taxon>
        <taxon>Isopoda</taxon>
        <taxon>Cirolanidae</taxon>
        <taxon>Eurydice</taxon>
    </lineage>
</organism>
<proteinExistence type="evidence at protein level"/>
<reference evidence="6 7" key="1">
    <citation type="journal article" date="2011" name="J. Comp. Neurol.">
        <title>A novel form of pigment-dispersing hormone in the central nervous system of the intertidal marine isopod, Eurydice pulchra (leach).</title>
        <authorList>
            <person name="Wilcockson D.C."/>
            <person name="Zhang L."/>
            <person name="Hastings M.H."/>
            <person name="Kyriacou C.P."/>
            <person name="Webster S.G."/>
        </authorList>
    </citation>
    <scope>NUCLEOTIDE SEQUENCE [MRNA]</scope>
    <scope>PROTEIN SEQUENCE OF 63-80</scope>
    <scope>TISSUE SPECIFICITY</scope>
    <scope>DEVELOPMENTAL STAGE</scope>
    <scope>MASS SPECTROMETRY</scope>
    <source>
        <tissue evidence="4">Head</tissue>
    </source>
</reference>
<evidence type="ECO:0000250" key="1">
    <source>
        <dbReference type="UniProtKB" id="P09929"/>
    </source>
</evidence>
<evidence type="ECO:0000250" key="2">
    <source>
        <dbReference type="UniProtKB" id="Q06202"/>
    </source>
</evidence>
<evidence type="ECO:0000255" key="3"/>
<evidence type="ECO:0000269" key="4">
    <source>
    </source>
</evidence>
<evidence type="ECO:0000303" key="5">
    <source>
    </source>
</evidence>
<evidence type="ECO:0000305" key="6"/>
<evidence type="ECO:0000312" key="7">
    <source>
        <dbReference type="EMBL" id="ACX49752.1"/>
    </source>
</evidence>
<comment type="function">
    <text evidence="2">The pigment-dispersing hormone causes the migration of the distal retinal pigment into the proximal end of the pigment chromatophore cells and thus decreases the amount of light entering the retinulas. May also function as a neurotransmitter and/or neuromodulator (By similarity).</text>
</comment>
<comment type="subcellular location">
    <subcellularLocation>
        <location evidence="6">Secreted</location>
    </subcellularLocation>
</comment>
<comment type="tissue specificity">
    <text evidence="4">Strongly expressed in eyestalk tissue and cerebral ganglia (at protein level).</text>
</comment>
<comment type="developmental stage">
    <text evidence="4">Does not display circadian or circatidal patterns of expression.</text>
</comment>
<comment type="mass spectrometry" mass="1913.83" method="MALDI" evidence="4">
    <molecule>Pigment-dispersing hormone</molecule>
</comment>
<comment type="similarity">
    <text evidence="3">Belongs to the arthropod PDH family.</text>
</comment>
<accession>D2IT41</accession>
<name>PDH_EURPU</name>
<sequence length="83" mass="9173">MRFIILGVLFIAVASMILSNGVMAQSRDFSISEREIVASLAKQLLRVARMGYVPEGDLPRKRNAELINSLLGVPRVMSDAGRR</sequence>